<proteinExistence type="inferred from homology"/>
<accession>Q874Z5</accession>
<evidence type="ECO:0000250" key="1"/>
<evidence type="ECO:0000255" key="2">
    <source>
        <dbReference type="PROSITE-ProRule" id="PRU01234"/>
    </source>
</evidence>
<evidence type="ECO:0000256" key="3">
    <source>
        <dbReference type="SAM" id="MobiDB-lite"/>
    </source>
</evidence>
<evidence type="ECO:0000305" key="4"/>
<gene>
    <name type="primary">OXR1</name>
    <name type="ORF">Pa5D0037</name>
</gene>
<dbReference type="EMBL" id="BX088700">
    <property type="protein sequence ID" value="CAD60724.1"/>
    <property type="molecule type" value="Genomic_DNA"/>
</dbReference>
<dbReference type="SMR" id="Q874Z5"/>
<dbReference type="VEuPathDB" id="FungiDB:PODANS_5_5690"/>
<dbReference type="GO" id="GO:0005739">
    <property type="term" value="C:mitochondrion"/>
    <property type="evidence" value="ECO:0007669"/>
    <property type="project" value="UniProtKB-SubCell"/>
</dbReference>
<dbReference type="GO" id="GO:0005634">
    <property type="term" value="C:nucleus"/>
    <property type="evidence" value="ECO:0007669"/>
    <property type="project" value="TreeGrafter"/>
</dbReference>
<dbReference type="GO" id="GO:0006979">
    <property type="term" value="P:response to oxidative stress"/>
    <property type="evidence" value="ECO:0007669"/>
    <property type="project" value="TreeGrafter"/>
</dbReference>
<dbReference type="InterPro" id="IPR006571">
    <property type="entry name" value="TLDc_dom"/>
</dbReference>
<dbReference type="PANTHER" id="PTHR23354:SF62">
    <property type="entry name" value="MUSTARD, ISOFORM V"/>
    <property type="match status" value="1"/>
</dbReference>
<dbReference type="PANTHER" id="PTHR23354">
    <property type="entry name" value="NUCLEOLAR PROTEIN 7/ESTROGEN RECEPTOR COACTIVATOR-RELATED"/>
    <property type="match status" value="1"/>
</dbReference>
<dbReference type="Pfam" id="PF07534">
    <property type="entry name" value="TLD"/>
    <property type="match status" value="2"/>
</dbReference>
<dbReference type="SMART" id="SM00584">
    <property type="entry name" value="TLDc"/>
    <property type="match status" value="1"/>
</dbReference>
<dbReference type="PROSITE" id="PS51886">
    <property type="entry name" value="TLDC"/>
    <property type="match status" value="1"/>
</dbReference>
<organism>
    <name type="scientific">Podospora anserina</name>
    <name type="common">Pleurage anserina</name>
    <dbReference type="NCBI Taxonomy" id="2587412"/>
    <lineage>
        <taxon>Eukaryota</taxon>
        <taxon>Fungi</taxon>
        <taxon>Dikarya</taxon>
        <taxon>Ascomycota</taxon>
        <taxon>Pezizomycotina</taxon>
        <taxon>Sordariomycetes</taxon>
        <taxon>Sordariomycetidae</taxon>
        <taxon>Sordariales</taxon>
        <taxon>Podosporaceae</taxon>
        <taxon>Podospora</taxon>
    </lineage>
</organism>
<keyword id="KW-0496">Mitochondrion</keyword>
<protein>
    <recommendedName>
        <fullName>Oxidation resistance protein 1</fullName>
    </recommendedName>
</protein>
<sequence>MSFYTSSSSQKTHNLNTRQSPDPDSSPASSPGAITPTTSHTETAGSSYFSNLLWGGLFRRFTSEPSPSLSTENSPPTLRHAHTYQPDGEDDGRNLGKSVDGIYTPPHFHHRVPSPMGLPQLEPLQLLGFSARTRTESRLLTPAIAEEVRNLVPTRLSIVDEWNLVYSLDQDGSSLATLYDKCDRYRGKRVGFVLAVRDTEGGIFGAYLSDVPHIAPNYFGTGECFLWRASVQAPLPPPPSLIDSEDTPDVGRSTTIRAEQNVASGQVNAHSIRFKAFPYSGVNEYYMLCGQQFLSVGAGDGRFGLWLDSGLEKGVSSTCQTFGNEPLSDEGEKFGVLGVELWVIGA</sequence>
<reference key="1">
    <citation type="journal article" date="2003" name="Fungal Genet. Biol.">
        <title>Characterization of the genomic organization of the region bordering the centromere of chromosome V of Podospora anserina by direct sequencing.</title>
        <authorList>
            <person name="Silar P."/>
            <person name="Barreau C."/>
            <person name="Debuchy R."/>
            <person name="Kicka S."/>
            <person name="Turcq B."/>
            <person name="Sainsard-Chanet A."/>
            <person name="Sellem C.H."/>
            <person name="Billault A."/>
            <person name="Cattolico L."/>
            <person name="Duprat S."/>
            <person name="Weissenbach J."/>
        </authorList>
    </citation>
    <scope>NUCLEOTIDE SEQUENCE [LARGE SCALE GENOMIC DNA]</scope>
    <source>
        <strain>s</strain>
    </source>
</reference>
<feature type="chain" id="PRO_0000058120" description="Oxidation resistance protein 1">
    <location>
        <begin position="1"/>
        <end position="346"/>
    </location>
</feature>
<feature type="domain" description="TLDc" evidence="2">
    <location>
        <begin position="138"/>
        <end position="345"/>
    </location>
</feature>
<feature type="region of interest" description="Disordered" evidence="3">
    <location>
        <begin position="1"/>
        <end position="42"/>
    </location>
</feature>
<feature type="region of interest" description="Disordered" evidence="3">
    <location>
        <begin position="64"/>
        <end position="108"/>
    </location>
</feature>
<feature type="compositionally biased region" description="Polar residues" evidence="3">
    <location>
        <begin position="1"/>
        <end position="19"/>
    </location>
</feature>
<feature type="compositionally biased region" description="Low complexity" evidence="3">
    <location>
        <begin position="20"/>
        <end position="31"/>
    </location>
</feature>
<feature type="compositionally biased region" description="Polar residues" evidence="3">
    <location>
        <begin position="64"/>
        <end position="76"/>
    </location>
</feature>
<comment type="function">
    <text evidence="1">May be involved in protection from oxidative damage.</text>
</comment>
<comment type="subcellular location">
    <subcellularLocation>
        <location evidence="1">Mitochondrion</location>
    </subcellularLocation>
</comment>
<comment type="similarity">
    <text evidence="4">Belongs to the OXR1 family.</text>
</comment>
<name>OXR1_PODAS</name>